<sequence>MEYNFTTIEKKWQKFWKDNQSFKTVSKPTDKKYYVLEMFPYPSGKMHMGHVSNYTIADSIARYYKLLGYDILHPMGWDAFGMPAENAAIEHKTHPAEWTLKNIANMKDQLNLLGYSYDWDREVTTCLPDYYKWGQWFILKMYEKGLLYRKGGDVNWCDHCNTVLANEQVTPEGTCWRCDGEVTKKKLEQWYIKVTDYAEQLDADLKLLEGYWPDNVIAMQKNWIGRSVGAYINFNLDDGKAFPIFTTRPDTIYGVTYMAIAWNYDGLLDMCTTEQKSAVEEFIKKSAKIDQKTDYEKEGVFTGRYVVNPFNGEKAPLYAANFVLAEYGSGAVMAVPAHDQRDFEFAKKYNIPVKVVIQNADNSLKAENMTEAYTEDGTVVNSDILNGLSSRDAIKRAIEYATEKGFGKEKVQYKLRDWLISRQRYWGNPLPFVHCEKCGVVPVPESELPITLPMDIEFTVGDNPLKKSESFVNTTCPKCGGKARRETDTMDTFTCSSWYYARYTDAHNNQMPFDPSAANAWLGVDQYIGGIEHACMHLLYSRFWYKFMRDIGLVKGDEPFNRLLTQGMVLANSYESRELKKFYTQEQMNNKEYEKDGIKKEDIIVKMEKMSKSKANGIDPAEIIELFGADAVRIFVMFVAPPEKDKEWSDEGVKGSSRFLNRIWNLFLKYKDEEAFKNGKSFDYNNLSKEGQKLFRKYNKTIKKVTIDIKDRFHFNTAIAALMELLNDMSVIKLANNDDYAMFKEVIRGYLILLNPIAPHMTEELYQILNFGKMILEERWVEHDEQYCKDDTFELVFQVNGKIRDRVEADVNISEDDAKAQALASEKVKAFTDGKNIVKVVYVKGKLVNIVVK</sequence>
<dbReference type="EC" id="6.1.1.4" evidence="1"/>
<dbReference type="EMBL" id="CP001357">
    <property type="protein sequence ID" value="ACN84716.1"/>
    <property type="molecule type" value="Genomic_DNA"/>
</dbReference>
<dbReference type="RefSeq" id="WP_012671748.1">
    <property type="nucleotide sequence ID" value="NC_012225.1"/>
</dbReference>
<dbReference type="SMR" id="C0QWR3"/>
<dbReference type="STRING" id="565034.BHWA1_02260"/>
<dbReference type="KEGG" id="bhy:BHWA1_02260"/>
<dbReference type="eggNOG" id="COG0495">
    <property type="taxonomic scope" value="Bacteria"/>
</dbReference>
<dbReference type="HOGENOM" id="CLU_004427_0_0_12"/>
<dbReference type="Proteomes" id="UP000001803">
    <property type="component" value="Chromosome"/>
</dbReference>
<dbReference type="GO" id="GO:0005829">
    <property type="term" value="C:cytosol"/>
    <property type="evidence" value="ECO:0007669"/>
    <property type="project" value="TreeGrafter"/>
</dbReference>
<dbReference type="GO" id="GO:0002161">
    <property type="term" value="F:aminoacyl-tRNA deacylase activity"/>
    <property type="evidence" value="ECO:0007669"/>
    <property type="project" value="InterPro"/>
</dbReference>
<dbReference type="GO" id="GO:0005524">
    <property type="term" value="F:ATP binding"/>
    <property type="evidence" value="ECO:0007669"/>
    <property type="project" value="UniProtKB-UniRule"/>
</dbReference>
<dbReference type="GO" id="GO:0004823">
    <property type="term" value="F:leucine-tRNA ligase activity"/>
    <property type="evidence" value="ECO:0007669"/>
    <property type="project" value="UniProtKB-UniRule"/>
</dbReference>
<dbReference type="GO" id="GO:0006429">
    <property type="term" value="P:leucyl-tRNA aminoacylation"/>
    <property type="evidence" value="ECO:0007669"/>
    <property type="project" value="UniProtKB-UniRule"/>
</dbReference>
<dbReference type="CDD" id="cd07958">
    <property type="entry name" value="Anticodon_Ia_Leu_BEm"/>
    <property type="match status" value="1"/>
</dbReference>
<dbReference type="CDD" id="cd00812">
    <property type="entry name" value="LeuRS_core"/>
    <property type="match status" value="1"/>
</dbReference>
<dbReference type="FunFam" id="1.10.730.10:FF:000002">
    <property type="entry name" value="Leucine--tRNA ligase"/>
    <property type="match status" value="1"/>
</dbReference>
<dbReference type="FunFam" id="3.40.50.620:FF:000003">
    <property type="entry name" value="Leucine--tRNA ligase"/>
    <property type="match status" value="1"/>
</dbReference>
<dbReference type="FunFam" id="3.40.50.620:FF:000056">
    <property type="entry name" value="Leucine--tRNA ligase"/>
    <property type="match status" value="1"/>
</dbReference>
<dbReference type="Gene3D" id="3.40.50.620">
    <property type="entry name" value="HUPs"/>
    <property type="match status" value="2"/>
</dbReference>
<dbReference type="Gene3D" id="1.10.730.10">
    <property type="entry name" value="Isoleucyl-tRNA Synthetase, Domain 1"/>
    <property type="match status" value="1"/>
</dbReference>
<dbReference type="HAMAP" id="MF_00049_B">
    <property type="entry name" value="Leu_tRNA_synth_B"/>
    <property type="match status" value="1"/>
</dbReference>
<dbReference type="InterPro" id="IPR001412">
    <property type="entry name" value="aa-tRNA-synth_I_CS"/>
</dbReference>
<dbReference type="InterPro" id="IPR002300">
    <property type="entry name" value="aa-tRNA-synth_Ia"/>
</dbReference>
<dbReference type="InterPro" id="IPR002302">
    <property type="entry name" value="Leu-tRNA-ligase"/>
</dbReference>
<dbReference type="InterPro" id="IPR025709">
    <property type="entry name" value="Leu_tRNA-synth_edit"/>
</dbReference>
<dbReference type="InterPro" id="IPR013155">
    <property type="entry name" value="M/V/L/I-tRNA-synth_anticd-bd"/>
</dbReference>
<dbReference type="InterPro" id="IPR015413">
    <property type="entry name" value="Methionyl/Leucyl_tRNA_Synth"/>
</dbReference>
<dbReference type="InterPro" id="IPR014729">
    <property type="entry name" value="Rossmann-like_a/b/a_fold"/>
</dbReference>
<dbReference type="InterPro" id="IPR009080">
    <property type="entry name" value="tRNAsynth_Ia_anticodon-bd"/>
</dbReference>
<dbReference type="InterPro" id="IPR009008">
    <property type="entry name" value="Val/Leu/Ile-tRNA-synth_edit"/>
</dbReference>
<dbReference type="NCBIfam" id="TIGR00396">
    <property type="entry name" value="leuS_bact"/>
    <property type="match status" value="1"/>
</dbReference>
<dbReference type="PANTHER" id="PTHR43740:SF2">
    <property type="entry name" value="LEUCINE--TRNA LIGASE, MITOCHONDRIAL"/>
    <property type="match status" value="1"/>
</dbReference>
<dbReference type="PANTHER" id="PTHR43740">
    <property type="entry name" value="LEUCYL-TRNA SYNTHETASE"/>
    <property type="match status" value="1"/>
</dbReference>
<dbReference type="Pfam" id="PF08264">
    <property type="entry name" value="Anticodon_1"/>
    <property type="match status" value="1"/>
</dbReference>
<dbReference type="Pfam" id="PF00133">
    <property type="entry name" value="tRNA-synt_1"/>
    <property type="match status" value="2"/>
</dbReference>
<dbReference type="Pfam" id="PF13603">
    <property type="entry name" value="tRNA-synt_1_2"/>
    <property type="match status" value="1"/>
</dbReference>
<dbReference type="Pfam" id="PF09334">
    <property type="entry name" value="tRNA-synt_1g"/>
    <property type="match status" value="1"/>
</dbReference>
<dbReference type="PRINTS" id="PR00985">
    <property type="entry name" value="TRNASYNTHLEU"/>
</dbReference>
<dbReference type="SUPFAM" id="SSF47323">
    <property type="entry name" value="Anticodon-binding domain of a subclass of class I aminoacyl-tRNA synthetases"/>
    <property type="match status" value="1"/>
</dbReference>
<dbReference type="SUPFAM" id="SSF52374">
    <property type="entry name" value="Nucleotidylyl transferase"/>
    <property type="match status" value="1"/>
</dbReference>
<dbReference type="SUPFAM" id="SSF50677">
    <property type="entry name" value="ValRS/IleRS/LeuRS editing domain"/>
    <property type="match status" value="1"/>
</dbReference>
<dbReference type="PROSITE" id="PS00178">
    <property type="entry name" value="AA_TRNA_LIGASE_I"/>
    <property type="match status" value="1"/>
</dbReference>
<comment type="catalytic activity">
    <reaction evidence="1">
        <text>tRNA(Leu) + L-leucine + ATP = L-leucyl-tRNA(Leu) + AMP + diphosphate</text>
        <dbReference type="Rhea" id="RHEA:11688"/>
        <dbReference type="Rhea" id="RHEA-COMP:9613"/>
        <dbReference type="Rhea" id="RHEA-COMP:9622"/>
        <dbReference type="ChEBI" id="CHEBI:30616"/>
        <dbReference type="ChEBI" id="CHEBI:33019"/>
        <dbReference type="ChEBI" id="CHEBI:57427"/>
        <dbReference type="ChEBI" id="CHEBI:78442"/>
        <dbReference type="ChEBI" id="CHEBI:78494"/>
        <dbReference type="ChEBI" id="CHEBI:456215"/>
        <dbReference type="EC" id="6.1.1.4"/>
    </reaction>
</comment>
<comment type="subcellular location">
    <subcellularLocation>
        <location evidence="1">Cytoplasm</location>
    </subcellularLocation>
</comment>
<comment type="similarity">
    <text evidence="1">Belongs to the class-I aminoacyl-tRNA synthetase family.</text>
</comment>
<feature type="chain" id="PRO_1000199183" description="Leucine--tRNA ligase">
    <location>
        <begin position="1"/>
        <end position="853"/>
    </location>
</feature>
<feature type="short sequence motif" description="'HIGH' region">
    <location>
        <begin position="40"/>
        <end position="50"/>
    </location>
</feature>
<feature type="short sequence motif" description="'KMSKS' region">
    <location>
        <begin position="609"/>
        <end position="613"/>
    </location>
</feature>
<feature type="binding site" evidence="1">
    <location>
        <position position="612"/>
    </location>
    <ligand>
        <name>ATP</name>
        <dbReference type="ChEBI" id="CHEBI:30616"/>
    </ligand>
</feature>
<evidence type="ECO:0000255" key="1">
    <source>
        <dbReference type="HAMAP-Rule" id="MF_00049"/>
    </source>
</evidence>
<accession>C0QWR3</accession>
<keyword id="KW-0030">Aminoacyl-tRNA synthetase</keyword>
<keyword id="KW-0067">ATP-binding</keyword>
<keyword id="KW-0963">Cytoplasm</keyword>
<keyword id="KW-0436">Ligase</keyword>
<keyword id="KW-0547">Nucleotide-binding</keyword>
<keyword id="KW-0648">Protein biosynthesis</keyword>
<organism>
    <name type="scientific">Brachyspira hyodysenteriae (strain ATCC 49526 / WA1)</name>
    <dbReference type="NCBI Taxonomy" id="565034"/>
    <lineage>
        <taxon>Bacteria</taxon>
        <taxon>Pseudomonadati</taxon>
        <taxon>Spirochaetota</taxon>
        <taxon>Spirochaetia</taxon>
        <taxon>Brachyspirales</taxon>
        <taxon>Brachyspiraceae</taxon>
        <taxon>Brachyspira</taxon>
    </lineage>
</organism>
<proteinExistence type="inferred from homology"/>
<gene>
    <name evidence="1" type="primary">leuS</name>
    <name type="ordered locus">BHWA1_02260</name>
</gene>
<protein>
    <recommendedName>
        <fullName evidence="1">Leucine--tRNA ligase</fullName>
        <ecNumber evidence="1">6.1.1.4</ecNumber>
    </recommendedName>
    <alternativeName>
        <fullName evidence="1">Leucyl-tRNA synthetase</fullName>
        <shortName evidence="1">LeuRS</shortName>
    </alternativeName>
</protein>
<name>SYL_BRAHW</name>
<reference key="1">
    <citation type="journal article" date="2009" name="PLoS ONE">
        <title>Genome sequence of the pathogenic intestinal spirochete Brachyspira hyodysenteriae reveals adaptations to its lifestyle in the porcine large intestine.</title>
        <authorList>
            <person name="Bellgard M.I."/>
            <person name="Wanchanthuek P."/>
            <person name="La T."/>
            <person name="Ryan K."/>
            <person name="Moolhuijzen P."/>
            <person name="Albertyn Z."/>
            <person name="Shaban B."/>
            <person name="Motro Y."/>
            <person name="Dunn D.S."/>
            <person name="Schibeci D."/>
            <person name="Hunter A."/>
            <person name="Barrero R."/>
            <person name="Phillips N.D."/>
            <person name="Hampson D.J."/>
        </authorList>
    </citation>
    <scope>NUCLEOTIDE SEQUENCE [LARGE SCALE GENOMIC DNA]</scope>
    <source>
        <strain>ATCC 49526 / WA1</strain>
    </source>
</reference>